<keyword id="KW-0067">ATP-binding</keyword>
<keyword id="KW-0093">Biotin biosynthesis</keyword>
<keyword id="KW-0963">Cytoplasm</keyword>
<keyword id="KW-0436">Ligase</keyword>
<keyword id="KW-0460">Magnesium</keyword>
<keyword id="KW-0479">Metal-binding</keyword>
<keyword id="KW-0547">Nucleotide-binding</keyword>
<name>BIOD_MYCA1</name>
<accession>A0QHJ8</accession>
<sequence length="226" mass="22572">MTVLVVTGTDTGVGKTVATAALACHARRAGIDVAVCKPVQTGTDDGDDDLAEVARLSGVTELAGLARYPRPLAPVAAAAAAGMALPSREQLLRFIGELDRPGRLTLVEGAGGLLVELGENGVTARDLAVALGAAVLVVVRPALGTLNHTALTLEALAAQGLSCAGLVIGAWPEHPGPVETSNRPALEALAPVRAVLPAGAAALAAAEFEAVSAGAFDRDWVTALAG</sequence>
<gene>
    <name evidence="1" type="primary">bioD</name>
    <name type="ordered locus">MAV_3204</name>
</gene>
<dbReference type="EC" id="6.3.3.3" evidence="1"/>
<dbReference type="EMBL" id="CP000479">
    <property type="protein sequence ID" value="ABK64599.1"/>
    <property type="molecule type" value="Genomic_DNA"/>
</dbReference>
<dbReference type="RefSeq" id="WP_011725322.1">
    <property type="nucleotide sequence ID" value="NC_008595.1"/>
</dbReference>
<dbReference type="SMR" id="A0QHJ8"/>
<dbReference type="GeneID" id="75270607"/>
<dbReference type="KEGG" id="mav:MAV_3204"/>
<dbReference type="HOGENOM" id="CLU_072551_1_0_11"/>
<dbReference type="UniPathway" id="UPA00078">
    <property type="reaction ID" value="UER00161"/>
</dbReference>
<dbReference type="Proteomes" id="UP000001574">
    <property type="component" value="Chromosome"/>
</dbReference>
<dbReference type="GO" id="GO:0005829">
    <property type="term" value="C:cytosol"/>
    <property type="evidence" value="ECO:0007669"/>
    <property type="project" value="TreeGrafter"/>
</dbReference>
<dbReference type="GO" id="GO:0005524">
    <property type="term" value="F:ATP binding"/>
    <property type="evidence" value="ECO:0007669"/>
    <property type="project" value="UniProtKB-UniRule"/>
</dbReference>
<dbReference type="GO" id="GO:0004141">
    <property type="term" value="F:dethiobiotin synthase activity"/>
    <property type="evidence" value="ECO:0007669"/>
    <property type="project" value="UniProtKB-UniRule"/>
</dbReference>
<dbReference type="GO" id="GO:0000287">
    <property type="term" value="F:magnesium ion binding"/>
    <property type="evidence" value="ECO:0007669"/>
    <property type="project" value="UniProtKB-UniRule"/>
</dbReference>
<dbReference type="GO" id="GO:0009102">
    <property type="term" value="P:biotin biosynthetic process"/>
    <property type="evidence" value="ECO:0007669"/>
    <property type="project" value="UniProtKB-UniRule"/>
</dbReference>
<dbReference type="CDD" id="cd03109">
    <property type="entry name" value="DTBS"/>
    <property type="match status" value="1"/>
</dbReference>
<dbReference type="Gene3D" id="3.40.50.300">
    <property type="entry name" value="P-loop containing nucleotide triphosphate hydrolases"/>
    <property type="match status" value="1"/>
</dbReference>
<dbReference type="HAMAP" id="MF_00336">
    <property type="entry name" value="BioD"/>
    <property type="match status" value="1"/>
</dbReference>
<dbReference type="InterPro" id="IPR004472">
    <property type="entry name" value="DTB_synth_BioD"/>
</dbReference>
<dbReference type="InterPro" id="IPR027417">
    <property type="entry name" value="P-loop_NTPase"/>
</dbReference>
<dbReference type="NCBIfam" id="TIGR00347">
    <property type="entry name" value="bioD"/>
    <property type="match status" value="1"/>
</dbReference>
<dbReference type="PANTHER" id="PTHR43210">
    <property type="entry name" value="DETHIOBIOTIN SYNTHETASE"/>
    <property type="match status" value="1"/>
</dbReference>
<dbReference type="PANTHER" id="PTHR43210:SF5">
    <property type="entry name" value="DETHIOBIOTIN SYNTHETASE"/>
    <property type="match status" value="1"/>
</dbReference>
<dbReference type="Pfam" id="PF13500">
    <property type="entry name" value="AAA_26"/>
    <property type="match status" value="1"/>
</dbReference>
<dbReference type="SUPFAM" id="SSF52540">
    <property type="entry name" value="P-loop containing nucleoside triphosphate hydrolases"/>
    <property type="match status" value="1"/>
</dbReference>
<comment type="function">
    <text evidence="1">Catalyzes a mechanistically unusual reaction, the ATP-dependent insertion of CO2 between the N7 and N8 nitrogen atoms of 7,8-diaminopelargonic acid (DAPA, also called 7,8-diammoniononanoate) to form a ureido ring.</text>
</comment>
<comment type="catalytic activity">
    <reaction evidence="1">
        <text>(7R,8S)-7,8-diammoniononanoate + CO2 + ATP = (4R,5S)-dethiobiotin + ADP + phosphate + 3 H(+)</text>
        <dbReference type="Rhea" id="RHEA:15805"/>
        <dbReference type="ChEBI" id="CHEBI:15378"/>
        <dbReference type="ChEBI" id="CHEBI:16526"/>
        <dbReference type="ChEBI" id="CHEBI:30616"/>
        <dbReference type="ChEBI" id="CHEBI:43474"/>
        <dbReference type="ChEBI" id="CHEBI:149469"/>
        <dbReference type="ChEBI" id="CHEBI:149473"/>
        <dbReference type="ChEBI" id="CHEBI:456216"/>
        <dbReference type="EC" id="6.3.3.3"/>
    </reaction>
</comment>
<comment type="cofactor">
    <cofactor evidence="1">
        <name>Mg(2+)</name>
        <dbReference type="ChEBI" id="CHEBI:18420"/>
    </cofactor>
</comment>
<comment type="pathway">
    <text evidence="1">Cofactor biosynthesis; biotin biosynthesis; biotin from 7,8-diaminononanoate: step 1/2.</text>
</comment>
<comment type="subunit">
    <text evidence="1">Homodimer.</text>
</comment>
<comment type="subcellular location">
    <subcellularLocation>
        <location evidence="1">Cytoplasm</location>
    </subcellularLocation>
</comment>
<comment type="similarity">
    <text evidence="1">Belongs to the dethiobiotin synthetase family.</text>
</comment>
<protein>
    <recommendedName>
        <fullName evidence="1">ATP-dependent dethiobiotin synthetase BioD</fullName>
        <ecNumber evidence="1">6.3.3.3</ecNumber>
    </recommendedName>
    <alternativeName>
        <fullName evidence="1">DTB synthetase</fullName>
        <shortName evidence="1">DTBS</shortName>
    </alternativeName>
    <alternativeName>
        <fullName evidence="1">Dethiobiotin synthase</fullName>
    </alternativeName>
</protein>
<proteinExistence type="inferred from homology"/>
<reference key="1">
    <citation type="submission" date="2006-10" db="EMBL/GenBank/DDBJ databases">
        <authorList>
            <person name="Fleischmann R.D."/>
            <person name="Dodson R.J."/>
            <person name="Haft D.H."/>
            <person name="Merkel J.S."/>
            <person name="Nelson W.C."/>
            <person name="Fraser C.M."/>
        </authorList>
    </citation>
    <scope>NUCLEOTIDE SEQUENCE [LARGE SCALE GENOMIC DNA]</scope>
    <source>
        <strain>104</strain>
    </source>
</reference>
<organism>
    <name type="scientific">Mycobacterium avium (strain 104)</name>
    <dbReference type="NCBI Taxonomy" id="243243"/>
    <lineage>
        <taxon>Bacteria</taxon>
        <taxon>Bacillati</taxon>
        <taxon>Actinomycetota</taxon>
        <taxon>Actinomycetes</taxon>
        <taxon>Mycobacteriales</taxon>
        <taxon>Mycobacteriaceae</taxon>
        <taxon>Mycobacterium</taxon>
        <taxon>Mycobacterium avium complex (MAC)</taxon>
    </lineage>
</organism>
<evidence type="ECO:0000255" key="1">
    <source>
        <dbReference type="HAMAP-Rule" id="MF_00336"/>
    </source>
</evidence>
<feature type="chain" id="PRO_0000302523" description="ATP-dependent dethiobiotin synthetase BioD">
    <location>
        <begin position="1"/>
        <end position="226"/>
    </location>
</feature>
<feature type="active site" evidence="1">
    <location>
        <position position="37"/>
    </location>
</feature>
<feature type="binding site" evidence="1">
    <location>
        <begin position="12"/>
        <end position="17"/>
    </location>
    <ligand>
        <name>ATP</name>
        <dbReference type="ChEBI" id="CHEBI:30616"/>
    </ligand>
</feature>
<feature type="binding site" evidence="1">
    <location>
        <position position="16"/>
    </location>
    <ligand>
        <name>Mg(2+)</name>
        <dbReference type="ChEBI" id="CHEBI:18420"/>
    </ligand>
</feature>
<feature type="binding site" evidence="1">
    <location>
        <position position="41"/>
    </location>
    <ligand>
        <name>substrate</name>
    </ligand>
</feature>
<feature type="binding site" evidence="1">
    <location>
        <position position="49"/>
    </location>
    <ligand>
        <name>ATP</name>
        <dbReference type="ChEBI" id="CHEBI:30616"/>
    </ligand>
</feature>
<feature type="binding site" evidence="1">
    <location>
        <position position="49"/>
    </location>
    <ligand>
        <name>Mg(2+)</name>
        <dbReference type="ChEBI" id="CHEBI:18420"/>
    </ligand>
</feature>
<feature type="binding site" evidence="1">
    <location>
        <begin position="108"/>
        <end position="111"/>
    </location>
    <ligand>
        <name>ATP</name>
        <dbReference type="ChEBI" id="CHEBI:30616"/>
    </ligand>
</feature>
<feature type="binding site" evidence="1">
    <location>
        <position position="108"/>
    </location>
    <ligand>
        <name>Mg(2+)</name>
        <dbReference type="ChEBI" id="CHEBI:18420"/>
    </ligand>
</feature>
<feature type="binding site" evidence="1">
    <location>
        <begin position="197"/>
        <end position="199"/>
    </location>
    <ligand>
        <name>ATP</name>
        <dbReference type="ChEBI" id="CHEBI:30616"/>
    </ligand>
</feature>